<accession>A7FMC2</accession>
<organism>
    <name type="scientific">Yersinia pseudotuberculosis serotype O:1b (strain IP 31758)</name>
    <dbReference type="NCBI Taxonomy" id="349747"/>
    <lineage>
        <taxon>Bacteria</taxon>
        <taxon>Pseudomonadati</taxon>
        <taxon>Pseudomonadota</taxon>
        <taxon>Gammaproteobacteria</taxon>
        <taxon>Enterobacterales</taxon>
        <taxon>Yersiniaceae</taxon>
        <taxon>Yersinia</taxon>
    </lineage>
</organism>
<dbReference type="EMBL" id="CP000720">
    <property type="protein sequence ID" value="ABS46972.1"/>
    <property type="molecule type" value="Genomic_DNA"/>
</dbReference>
<dbReference type="RefSeq" id="WP_011191709.1">
    <property type="nucleotide sequence ID" value="NC_009708.1"/>
</dbReference>
<dbReference type="SMR" id="A7FMC2"/>
<dbReference type="GeneID" id="49787365"/>
<dbReference type="KEGG" id="ypi:YpsIP31758_3445"/>
<dbReference type="HOGENOM" id="CLU_128074_0_0_6"/>
<dbReference type="Proteomes" id="UP000002412">
    <property type="component" value="Chromosome"/>
</dbReference>
<dbReference type="GO" id="GO:0070987">
    <property type="term" value="P:error-free translesion synthesis"/>
    <property type="evidence" value="ECO:0007669"/>
    <property type="project" value="TreeGrafter"/>
</dbReference>
<dbReference type="Gene3D" id="2.60.40.1470">
    <property type="entry name" value="ApaG domain"/>
    <property type="match status" value="1"/>
</dbReference>
<dbReference type="HAMAP" id="MF_00791">
    <property type="entry name" value="ApaG"/>
    <property type="match status" value="1"/>
</dbReference>
<dbReference type="InterPro" id="IPR007474">
    <property type="entry name" value="ApaG_domain"/>
</dbReference>
<dbReference type="InterPro" id="IPR036767">
    <property type="entry name" value="ApaG_sf"/>
</dbReference>
<dbReference type="InterPro" id="IPR023065">
    <property type="entry name" value="Uncharacterised_ApaG"/>
</dbReference>
<dbReference type="NCBIfam" id="NF003967">
    <property type="entry name" value="PRK05461.1"/>
    <property type="match status" value="1"/>
</dbReference>
<dbReference type="PANTHER" id="PTHR14289">
    <property type="entry name" value="F-BOX ONLY PROTEIN 3"/>
    <property type="match status" value="1"/>
</dbReference>
<dbReference type="PANTHER" id="PTHR14289:SF16">
    <property type="entry name" value="POLYMERASE DELTA-INTERACTING PROTEIN 2"/>
    <property type="match status" value="1"/>
</dbReference>
<dbReference type="Pfam" id="PF04379">
    <property type="entry name" value="DUF525"/>
    <property type="match status" value="1"/>
</dbReference>
<dbReference type="SUPFAM" id="SSF110069">
    <property type="entry name" value="ApaG-like"/>
    <property type="match status" value="1"/>
</dbReference>
<dbReference type="PROSITE" id="PS51087">
    <property type="entry name" value="APAG"/>
    <property type="match status" value="1"/>
</dbReference>
<name>APAG_YERP3</name>
<feature type="chain" id="PRO_1000083673" description="Protein ApaG">
    <location>
        <begin position="1"/>
        <end position="125"/>
    </location>
</feature>
<feature type="domain" description="ApaG" evidence="1">
    <location>
        <begin position="1"/>
        <end position="125"/>
    </location>
</feature>
<gene>
    <name evidence="1" type="primary">apaG</name>
    <name type="ordered locus">YpsIP31758_3445</name>
</gene>
<sequence length="125" mass="14117">MIEQPRICVQVQSIYVETQSIPEEERFVFAYTVTVRNLGRSNVQLLGRYWLITNSNGRQTEVQGEGVIGEQPLILPGNEFQYTSGAVLETPLGTMEGHYEMIDHLGQAFRTVIPVFRLAIPALIH</sequence>
<protein>
    <recommendedName>
        <fullName evidence="1">Protein ApaG</fullName>
    </recommendedName>
</protein>
<reference key="1">
    <citation type="journal article" date="2007" name="PLoS Genet.">
        <title>The complete genome sequence of Yersinia pseudotuberculosis IP31758, the causative agent of Far East scarlet-like fever.</title>
        <authorList>
            <person name="Eppinger M."/>
            <person name="Rosovitz M.J."/>
            <person name="Fricke W.F."/>
            <person name="Rasko D.A."/>
            <person name="Kokorina G."/>
            <person name="Fayolle C."/>
            <person name="Lindler L.E."/>
            <person name="Carniel E."/>
            <person name="Ravel J."/>
        </authorList>
    </citation>
    <scope>NUCLEOTIDE SEQUENCE [LARGE SCALE GENOMIC DNA]</scope>
    <source>
        <strain>IP 31758</strain>
    </source>
</reference>
<proteinExistence type="inferred from homology"/>
<evidence type="ECO:0000255" key="1">
    <source>
        <dbReference type="HAMAP-Rule" id="MF_00791"/>
    </source>
</evidence>